<keyword id="KW-0007">Acetylation</keyword>
<keyword id="KW-0013">ADP-ribosylation</keyword>
<keyword id="KW-0025">Alternative splicing</keyword>
<keyword id="KW-0131">Cell cycle</keyword>
<keyword id="KW-0132">Cell division</keyword>
<keyword id="KW-0137">Centromere</keyword>
<keyword id="KW-0158">Chromosome</keyword>
<keyword id="KW-0159">Chromosome partition</keyword>
<keyword id="KW-1017">Isopeptide bond</keyword>
<keyword id="KW-0995">Kinetochore</keyword>
<keyword id="KW-0469">Meiosis</keyword>
<keyword id="KW-0498">Mitosis</keyword>
<keyword id="KW-0539">Nucleus</keyword>
<keyword id="KW-0597">Phosphoprotein</keyword>
<keyword id="KW-1267">Proteomics identification</keyword>
<keyword id="KW-1185">Reference proteome</keyword>
<keyword id="KW-0677">Repeat</keyword>
<keyword id="KW-0832">Ubl conjugation</keyword>
<keyword id="KW-0853">WD repeat</keyword>
<reference key="1">
    <citation type="journal article" date="1999" name="Biochem. Biophys. Res. Commun.">
        <title>Phosphorylation of human MAD1 by the BUB1 kinase in vitro.</title>
        <authorList>
            <person name="Seeley T.W."/>
            <person name="Wang L."/>
            <person name="Zhen J.Y."/>
        </authorList>
    </citation>
    <scope>NUCLEOTIDE SEQUENCE [MRNA] (ISOFORMS 1 AND 2)</scope>
    <scope>FUNCTION</scope>
    <scope>INTERACTION WITH BUB1 AND MAD1L1</scope>
    <source>
        <tissue>Spleen</tissue>
        <tissue>Testis</tissue>
    </source>
</reference>
<reference key="2">
    <citation type="journal article" date="1998" name="J. Cell Biol.">
        <title>The human homologue of Bub3 is required for kinetochore localization of Bub1 and a Mad3/Bub1-related protein kinase.</title>
        <authorList>
            <person name="Taylor S.S."/>
            <person name="Ha E."/>
            <person name="McKeon F."/>
        </authorList>
    </citation>
    <scope>NUCLEOTIDE SEQUENCE [MRNA] (ISOFORM 1)</scope>
</reference>
<reference key="3">
    <citation type="submission" date="1998-08" db="EMBL/GenBank/DDBJ databases">
        <title>Human BUB3 is a kinetochore protein that interacts with hBUB1 and hBUBR1.</title>
        <authorList>
            <person name="Chan G.K.T."/>
            <person name="Yen T.J."/>
        </authorList>
    </citation>
    <scope>NUCLEOTIDE SEQUENCE [MRNA] (ISOFORM 1)</scope>
</reference>
<reference key="4">
    <citation type="journal article" date="2004" name="Nat. Genet.">
        <title>Complete sequencing and characterization of 21,243 full-length human cDNAs.</title>
        <authorList>
            <person name="Ota T."/>
            <person name="Suzuki Y."/>
            <person name="Nishikawa T."/>
            <person name="Otsuki T."/>
            <person name="Sugiyama T."/>
            <person name="Irie R."/>
            <person name="Wakamatsu A."/>
            <person name="Hayashi K."/>
            <person name="Sato H."/>
            <person name="Nagai K."/>
            <person name="Kimura K."/>
            <person name="Makita H."/>
            <person name="Sekine M."/>
            <person name="Obayashi M."/>
            <person name="Nishi T."/>
            <person name="Shibahara T."/>
            <person name="Tanaka T."/>
            <person name="Ishii S."/>
            <person name="Yamamoto J."/>
            <person name="Saito K."/>
            <person name="Kawai Y."/>
            <person name="Isono Y."/>
            <person name="Nakamura Y."/>
            <person name="Nagahari K."/>
            <person name="Murakami K."/>
            <person name="Yasuda T."/>
            <person name="Iwayanagi T."/>
            <person name="Wagatsuma M."/>
            <person name="Shiratori A."/>
            <person name="Sudo H."/>
            <person name="Hosoiri T."/>
            <person name="Kaku Y."/>
            <person name="Kodaira H."/>
            <person name="Kondo H."/>
            <person name="Sugawara M."/>
            <person name="Takahashi M."/>
            <person name="Kanda K."/>
            <person name="Yokoi T."/>
            <person name="Furuya T."/>
            <person name="Kikkawa E."/>
            <person name="Omura Y."/>
            <person name="Abe K."/>
            <person name="Kamihara K."/>
            <person name="Katsuta N."/>
            <person name="Sato K."/>
            <person name="Tanikawa M."/>
            <person name="Yamazaki M."/>
            <person name="Ninomiya K."/>
            <person name="Ishibashi T."/>
            <person name="Yamashita H."/>
            <person name="Murakawa K."/>
            <person name="Fujimori K."/>
            <person name="Tanai H."/>
            <person name="Kimata M."/>
            <person name="Watanabe M."/>
            <person name="Hiraoka S."/>
            <person name="Chiba Y."/>
            <person name="Ishida S."/>
            <person name="Ono Y."/>
            <person name="Takiguchi S."/>
            <person name="Watanabe S."/>
            <person name="Yosida M."/>
            <person name="Hotuta T."/>
            <person name="Kusano J."/>
            <person name="Kanehori K."/>
            <person name="Takahashi-Fujii A."/>
            <person name="Hara H."/>
            <person name="Tanase T.-O."/>
            <person name="Nomura Y."/>
            <person name="Togiya S."/>
            <person name="Komai F."/>
            <person name="Hara R."/>
            <person name="Takeuchi K."/>
            <person name="Arita M."/>
            <person name="Imose N."/>
            <person name="Musashino K."/>
            <person name="Yuuki H."/>
            <person name="Oshima A."/>
            <person name="Sasaki N."/>
            <person name="Aotsuka S."/>
            <person name="Yoshikawa Y."/>
            <person name="Matsunawa H."/>
            <person name="Ichihara T."/>
            <person name="Shiohata N."/>
            <person name="Sano S."/>
            <person name="Moriya S."/>
            <person name="Momiyama H."/>
            <person name="Satoh N."/>
            <person name="Takami S."/>
            <person name="Terashima Y."/>
            <person name="Suzuki O."/>
            <person name="Nakagawa S."/>
            <person name="Senoh A."/>
            <person name="Mizoguchi H."/>
            <person name="Goto Y."/>
            <person name="Shimizu F."/>
            <person name="Wakebe H."/>
            <person name="Hishigaki H."/>
            <person name="Watanabe T."/>
            <person name="Sugiyama A."/>
            <person name="Takemoto M."/>
            <person name="Kawakami B."/>
            <person name="Yamazaki M."/>
            <person name="Watanabe K."/>
            <person name="Kumagai A."/>
            <person name="Itakura S."/>
            <person name="Fukuzumi Y."/>
            <person name="Fujimori Y."/>
            <person name="Komiyama M."/>
            <person name="Tashiro H."/>
            <person name="Tanigami A."/>
            <person name="Fujiwara T."/>
            <person name="Ono T."/>
            <person name="Yamada K."/>
            <person name="Fujii Y."/>
            <person name="Ozaki K."/>
            <person name="Hirao M."/>
            <person name="Ohmori Y."/>
            <person name="Kawabata A."/>
            <person name="Hikiji T."/>
            <person name="Kobatake N."/>
            <person name="Inagaki H."/>
            <person name="Ikema Y."/>
            <person name="Okamoto S."/>
            <person name="Okitani R."/>
            <person name="Kawakami T."/>
            <person name="Noguchi S."/>
            <person name="Itoh T."/>
            <person name="Shigeta K."/>
            <person name="Senba T."/>
            <person name="Matsumura K."/>
            <person name="Nakajima Y."/>
            <person name="Mizuno T."/>
            <person name="Morinaga M."/>
            <person name="Sasaki M."/>
            <person name="Togashi T."/>
            <person name="Oyama M."/>
            <person name="Hata H."/>
            <person name="Watanabe M."/>
            <person name="Komatsu T."/>
            <person name="Mizushima-Sugano J."/>
            <person name="Satoh T."/>
            <person name="Shirai Y."/>
            <person name="Takahashi Y."/>
            <person name="Nakagawa K."/>
            <person name="Okumura K."/>
            <person name="Nagase T."/>
            <person name="Nomura N."/>
            <person name="Kikuchi H."/>
            <person name="Masuho Y."/>
            <person name="Yamashita R."/>
            <person name="Nakai K."/>
            <person name="Yada T."/>
            <person name="Nakamura Y."/>
            <person name="Ohara O."/>
            <person name="Isogai T."/>
            <person name="Sugano S."/>
        </authorList>
    </citation>
    <scope>NUCLEOTIDE SEQUENCE [LARGE SCALE MRNA] (ISOFORM 1)</scope>
    <source>
        <tissue>Tongue</tissue>
    </source>
</reference>
<reference key="5">
    <citation type="journal article" date="2004" name="Nature">
        <title>The DNA sequence and comparative analysis of human chromosome 10.</title>
        <authorList>
            <person name="Deloukas P."/>
            <person name="Earthrowl M.E."/>
            <person name="Grafham D.V."/>
            <person name="Rubenfield M."/>
            <person name="French L."/>
            <person name="Steward C.A."/>
            <person name="Sims S.K."/>
            <person name="Jones M.C."/>
            <person name="Searle S."/>
            <person name="Scott C."/>
            <person name="Howe K."/>
            <person name="Hunt S.E."/>
            <person name="Andrews T.D."/>
            <person name="Gilbert J.G.R."/>
            <person name="Swarbreck D."/>
            <person name="Ashurst J.L."/>
            <person name="Taylor A."/>
            <person name="Battles J."/>
            <person name="Bird C.P."/>
            <person name="Ainscough R."/>
            <person name="Almeida J.P."/>
            <person name="Ashwell R.I.S."/>
            <person name="Ambrose K.D."/>
            <person name="Babbage A.K."/>
            <person name="Bagguley C.L."/>
            <person name="Bailey J."/>
            <person name="Banerjee R."/>
            <person name="Bates K."/>
            <person name="Beasley H."/>
            <person name="Bray-Allen S."/>
            <person name="Brown A.J."/>
            <person name="Brown J.Y."/>
            <person name="Burford D.C."/>
            <person name="Burrill W."/>
            <person name="Burton J."/>
            <person name="Cahill P."/>
            <person name="Camire D."/>
            <person name="Carter N.P."/>
            <person name="Chapman J.C."/>
            <person name="Clark S.Y."/>
            <person name="Clarke G."/>
            <person name="Clee C.M."/>
            <person name="Clegg S."/>
            <person name="Corby N."/>
            <person name="Coulson A."/>
            <person name="Dhami P."/>
            <person name="Dutta I."/>
            <person name="Dunn M."/>
            <person name="Faulkner L."/>
            <person name="Frankish A."/>
            <person name="Frankland J.A."/>
            <person name="Garner P."/>
            <person name="Garnett J."/>
            <person name="Gribble S."/>
            <person name="Griffiths C."/>
            <person name="Grocock R."/>
            <person name="Gustafson E."/>
            <person name="Hammond S."/>
            <person name="Harley J.L."/>
            <person name="Hart E."/>
            <person name="Heath P.D."/>
            <person name="Ho T.P."/>
            <person name="Hopkins B."/>
            <person name="Horne J."/>
            <person name="Howden P.J."/>
            <person name="Huckle E."/>
            <person name="Hynds C."/>
            <person name="Johnson C."/>
            <person name="Johnson D."/>
            <person name="Kana A."/>
            <person name="Kay M."/>
            <person name="Kimberley A.M."/>
            <person name="Kershaw J.K."/>
            <person name="Kokkinaki M."/>
            <person name="Laird G.K."/>
            <person name="Lawlor S."/>
            <person name="Lee H.M."/>
            <person name="Leongamornlert D.A."/>
            <person name="Laird G."/>
            <person name="Lloyd C."/>
            <person name="Lloyd D.M."/>
            <person name="Loveland J."/>
            <person name="Lovell J."/>
            <person name="McLaren S."/>
            <person name="McLay K.E."/>
            <person name="McMurray A."/>
            <person name="Mashreghi-Mohammadi M."/>
            <person name="Matthews L."/>
            <person name="Milne S."/>
            <person name="Nickerson T."/>
            <person name="Nguyen M."/>
            <person name="Overton-Larty E."/>
            <person name="Palmer S.A."/>
            <person name="Pearce A.V."/>
            <person name="Peck A.I."/>
            <person name="Pelan S."/>
            <person name="Phillimore B."/>
            <person name="Porter K."/>
            <person name="Rice C.M."/>
            <person name="Rogosin A."/>
            <person name="Ross M.T."/>
            <person name="Sarafidou T."/>
            <person name="Sehra H.K."/>
            <person name="Shownkeen R."/>
            <person name="Skuce C.D."/>
            <person name="Smith M."/>
            <person name="Standring L."/>
            <person name="Sycamore N."/>
            <person name="Tester J."/>
            <person name="Thorpe A."/>
            <person name="Torcasso W."/>
            <person name="Tracey A."/>
            <person name="Tromans A."/>
            <person name="Tsolas J."/>
            <person name="Wall M."/>
            <person name="Walsh J."/>
            <person name="Wang H."/>
            <person name="Weinstock K."/>
            <person name="West A.P."/>
            <person name="Willey D.L."/>
            <person name="Whitehead S.L."/>
            <person name="Wilming L."/>
            <person name="Wray P.W."/>
            <person name="Young L."/>
            <person name="Chen Y."/>
            <person name="Lovering R.C."/>
            <person name="Moschonas N.K."/>
            <person name="Siebert R."/>
            <person name="Fechtel K."/>
            <person name="Bentley D."/>
            <person name="Durbin R.M."/>
            <person name="Hubbard T."/>
            <person name="Doucette-Stamm L."/>
            <person name="Beck S."/>
            <person name="Smith D.R."/>
            <person name="Rogers J."/>
        </authorList>
    </citation>
    <scope>NUCLEOTIDE SEQUENCE [LARGE SCALE GENOMIC DNA]</scope>
</reference>
<reference key="6">
    <citation type="submission" date="2005-09" db="EMBL/GenBank/DDBJ databases">
        <authorList>
            <person name="Mural R.J."/>
            <person name="Istrail S."/>
            <person name="Sutton G.G."/>
            <person name="Florea L."/>
            <person name="Halpern A.L."/>
            <person name="Mobarry C.M."/>
            <person name="Lippert R."/>
            <person name="Walenz B."/>
            <person name="Shatkay H."/>
            <person name="Dew I."/>
            <person name="Miller J.R."/>
            <person name="Flanigan M.J."/>
            <person name="Edwards N.J."/>
            <person name="Bolanos R."/>
            <person name="Fasulo D."/>
            <person name="Halldorsson B.V."/>
            <person name="Hannenhalli S."/>
            <person name="Turner R."/>
            <person name="Yooseph S."/>
            <person name="Lu F."/>
            <person name="Nusskern D.R."/>
            <person name="Shue B.C."/>
            <person name="Zheng X.H."/>
            <person name="Zhong F."/>
            <person name="Delcher A.L."/>
            <person name="Huson D.H."/>
            <person name="Kravitz S.A."/>
            <person name="Mouchard L."/>
            <person name="Reinert K."/>
            <person name="Remington K.A."/>
            <person name="Clark A.G."/>
            <person name="Waterman M.S."/>
            <person name="Eichler E.E."/>
            <person name="Adams M.D."/>
            <person name="Hunkapiller M.W."/>
            <person name="Myers E.W."/>
            <person name="Venter J.C."/>
        </authorList>
    </citation>
    <scope>NUCLEOTIDE SEQUENCE [LARGE SCALE GENOMIC DNA]</scope>
</reference>
<reference key="7">
    <citation type="journal article" date="2004" name="Genome Res.">
        <title>The status, quality, and expansion of the NIH full-length cDNA project: the Mammalian Gene Collection (MGC).</title>
        <authorList>
            <consortium name="The MGC Project Team"/>
        </authorList>
    </citation>
    <scope>NUCLEOTIDE SEQUENCE [LARGE SCALE MRNA] (ISOFORM 1)</scope>
    <source>
        <tissue>Brain</tissue>
        <tissue>Placenta</tissue>
    </source>
</reference>
<reference key="8">
    <citation type="journal article" date="2004" name="Mol. Cell">
        <title>Phosphorylation of Cdc20 by Bub1 provides a catalytic mechanism for APC/C inhibition by the spindle checkpoint.</title>
        <authorList>
            <person name="Tang Z."/>
            <person name="Shu H."/>
            <person name="Oncel D."/>
            <person name="Chen S."/>
            <person name="Yu H."/>
        </authorList>
    </citation>
    <scope>FUNCTION</scope>
    <scope>INTERACTION WITH BUB1</scope>
</reference>
<reference key="9">
    <citation type="journal article" date="2008" name="Mol. Biol. Cell">
        <title>The human spindle assembly checkpoint protein Bub3 is required for the establishment of efficient kinetochore-microtubule attachments.</title>
        <authorList>
            <person name="Logarinho E."/>
            <person name="Resende T."/>
            <person name="Torres C."/>
            <person name="Bousbaa H."/>
        </authorList>
    </citation>
    <scope>FUNCTION</scope>
</reference>
<reference key="10">
    <citation type="journal article" date="2008" name="Proc. Natl. Acad. Sci. U.S.A.">
        <title>A quantitative atlas of mitotic phosphorylation.</title>
        <authorList>
            <person name="Dephoure N."/>
            <person name="Zhou C."/>
            <person name="Villen J."/>
            <person name="Beausoleil S.A."/>
            <person name="Bakalarski C.E."/>
            <person name="Elledge S.J."/>
            <person name="Gygi S.P."/>
        </authorList>
    </citation>
    <scope>PHOSPHORYLATION [LARGE SCALE ANALYSIS] AT SER-211</scope>
    <scope>IDENTIFICATION BY MASS SPECTROMETRY [LARGE SCALE ANALYSIS]</scope>
    <source>
        <tissue>Cervix carcinoma</tissue>
    </source>
</reference>
<reference key="11">
    <citation type="journal article" date="2009" name="Science">
        <title>Lysine acetylation targets protein complexes and co-regulates major cellular functions.</title>
        <authorList>
            <person name="Choudhary C."/>
            <person name="Kumar C."/>
            <person name="Gnad F."/>
            <person name="Nielsen M.L."/>
            <person name="Rehman M."/>
            <person name="Walther T.C."/>
            <person name="Olsen J.V."/>
            <person name="Mann M."/>
        </authorList>
    </citation>
    <scope>ACETYLATION [LARGE SCALE ANALYSIS] AT LYS-179</scope>
    <scope>IDENTIFICATION BY MASS SPECTROMETRY [LARGE SCALE ANALYSIS]</scope>
</reference>
<reference key="12">
    <citation type="journal article" date="2011" name="BMC Syst. Biol.">
        <title>Initial characterization of the human central proteome.</title>
        <authorList>
            <person name="Burkard T.R."/>
            <person name="Planyavsky M."/>
            <person name="Kaupe I."/>
            <person name="Breitwieser F.P."/>
            <person name="Buerckstuemmer T."/>
            <person name="Bennett K.L."/>
            <person name="Superti-Furga G."/>
            <person name="Colinge J."/>
        </authorList>
    </citation>
    <scope>IDENTIFICATION BY MASS SPECTROMETRY [LARGE SCALE ANALYSIS]</scope>
</reference>
<reference key="13">
    <citation type="journal article" date="2013" name="J. Proteome Res.">
        <title>Toward a comprehensive characterization of a human cancer cell phosphoproteome.</title>
        <authorList>
            <person name="Zhou H."/>
            <person name="Di Palma S."/>
            <person name="Preisinger C."/>
            <person name="Peng M."/>
            <person name="Polat A.N."/>
            <person name="Heck A.J."/>
            <person name="Mohammed S."/>
        </authorList>
    </citation>
    <scope>PHOSPHORYLATION [LARGE SCALE ANALYSIS] AT SER-211</scope>
    <scope>IDENTIFICATION BY MASS SPECTROMETRY [LARGE SCALE ANALYSIS]</scope>
    <source>
        <tissue>Erythroleukemia</tissue>
    </source>
</reference>
<reference key="14">
    <citation type="journal article" date="2014" name="Dev. Cell">
        <title>A microtubule-associated zinc finger protein, BuGZ, regulates mitotic chromosome alignment by ensuring Bub3 stability and kinetochore targeting.</title>
        <authorList>
            <person name="Jiang H."/>
            <person name="He X."/>
            <person name="Wang S."/>
            <person name="Jia J."/>
            <person name="Wan Y."/>
            <person name="Wang Y."/>
            <person name="Zeng R."/>
            <person name="Yates J. III"/>
            <person name="Zhu X."/>
            <person name="Zheng Y."/>
        </authorList>
    </citation>
    <scope>INTERACTION WITH ZNF207</scope>
</reference>
<reference key="15">
    <citation type="journal article" date="2014" name="Dev. Cell">
        <title>BuGZ is required for Bub3 stability, Bub1 kinetochore function, and chromosome alignment.</title>
        <authorList>
            <person name="Toledo C.M."/>
            <person name="Herman J.A."/>
            <person name="Olsen J.B."/>
            <person name="Ding Y."/>
            <person name="Corrin P."/>
            <person name="Girard E.J."/>
            <person name="Olson J.M."/>
            <person name="Emili A."/>
            <person name="Deluca J.G."/>
            <person name="Paddison P.J."/>
        </authorList>
    </citation>
    <scope>INTERACTION WITH ZNF207</scope>
</reference>
<reference key="16">
    <citation type="journal article" date="2022" name="Proc. Natl. Acad. Sci. U.S.A.">
        <title>Role of ubiquitin-protein ligase UBR5 in the disassembly of mitotic checkpoint complexes.</title>
        <authorList>
            <person name="Kaisari S."/>
            <person name="Miniowitz-Shemtov S."/>
            <person name="Sitry-Shevah D."/>
            <person name="Shomer P."/>
            <person name="Kozlov G."/>
            <person name="Gehring K."/>
            <person name="Hershko A."/>
        </authorList>
    </citation>
    <scope>UBIQUITINATION</scope>
</reference>
<evidence type="ECO:0000250" key="1"/>
<evidence type="ECO:0000250" key="2">
    <source>
        <dbReference type="UniProtKB" id="Q9WVA3"/>
    </source>
</evidence>
<evidence type="ECO:0000269" key="3">
    <source>
    </source>
</evidence>
<evidence type="ECO:0000269" key="4">
    <source>
    </source>
</evidence>
<evidence type="ECO:0000269" key="5">
    <source>
    </source>
</evidence>
<evidence type="ECO:0000269" key="6">
    <source>
    </source>
</evidence>
<evidence type="ECO:0000269" key="7">
    <source>
    </source>
</evidence>
<evidence type="ECO:0000269" key="8">
    <source>
    </source>
</evidence>
<evidence type="ECO:0000303" key="9">
    <source>
    </source>
</evidence>
<evidence type="ECO:0000305" key="10"/>
<evidence type="ECO:0007744" key="11">
    <source>
    </source>
</evidence>
<evidence type="ECO:0007744" key="12">
    <source>
    </source>
</evidence>
<evidence type="ECO:0007744" key="13">
    <source>
    </source>
</evidence>
<gene>
    <name type="primary">BUB3</name>
</gene>
<feature type="chain" id="PRO_0000050891" description="Mitotic checkpoint protein BUB3">
    <location>
        <begin position="1"/>
        <end position="328"/>
    </location>
</feature>
<feature type="repeat" description="WD 1">
    <location>
        <begin position="4"/>
        <end position="44"/>
    </location>
</feature>
<feature type="repeat" description="WD 2">
    <location>
        <begin position="47"/>
        <end position="84"/>
    </location>
</feature>
<feature type="repeat" description="WD 3">
    <location>
        <begin position="87"/>
        <end position="125"/>
    </location>
</feature>
<feature type="repeat" description="WD 4">
    <location>
        <begin position="129"/>
        <end position="164"/>
    </location>
</feature>
<feature type="repeat" description="WD 5">
    <location>
        <begin position="170"/>
        <end position="210"/>
    </location>
</feature>
<feature type="repeat" description="WD 6">
    <location>
        <begin position="217"/>
        <end position="263"/>
    </location>
</feature>
<feature type="repeat" description="WD 7">
    <location>
        <begin position="267"/>
        <end position="316"/>
    </location>
</feature>
<feature type="modified residue" description="N6-acetyllysine" evidence="12">
    <location>
        <position position="179"/>
    </location>
</feature>
<feature type="modified residue" description="Phosphoserine" evidence="11 13">
    <location>
        <position position="211"/>
    </location>
</feature>
<feature type="cross-link" description="Glycyl lysine isopeptide (Lys-Gly) (interchain with G-Cter in ubiquitin)">
    <location>
        <position position="216"/>
    </location>
</feature>
<feature type="splice variant" id="VSP_038655" description="In isoform 2." evidence="9">
    <original>PCT</original>
    <variation>T</variation>
    <location>
        <begin position="326"/>
        <end position="328"/>
    </location>
</feature>
<proteinExistence type="evidence at protein level"/>
<sequence>MTGSNEFKLNQPPEDGISSVKFSPNTSQFLLVSSWDTSVRLYDVPANSMRLKYQHTGAVLDCAFYDPTHAWSGGLDHQLKMHDLNTDQENLVGTHDAPIRCVEYCPEVNVMVTGSWDQTVKLWDPRTPCNAGTFSQPEKVYTLSVSGDRLIVGTAGRRVLVWDLRNMGYVQQRRESSLKYQTRCIRAFPNKQGYVLSSIEGRVAVEYLDPSPEVQKKKYAFKCHRLKENNIEQIYPVNAISFHNIHNTFATGGSDGFVNIWDPFNKKRLCQFHRYPTSIASLAFSNDGTTLAIASSYMYEMDDTEHPEDGIFIRQVTDAETKPKSPCT</sequence>
<name>BUB3_HUMAN</name>
<accession>O43684</accession>
<accession>A6NJ42</accession>
<accession>B2R6E7</accession>
<accession>D3DRE9</accession>
<accession>O43685</accession>
<dbReference type="EMBL" id="AF047472">
    <property type="protein sequence ID" value="AAC28438.1"/>
    <property type="molecule type" value="mRNA"/>
</dbReference>
<dbReference type="EMBL" id="AF047473">
    <property type="protein sequence ID" value="AAC28439.1"/>
    <property type="molecule type" value="mRNA"/>
</dbReference>
<dbReference type="EMBL" id="AF053304">
    <property type="protein sequence ID" value="AAC06258.1"/>
    <property type="molecule type" value="mRNA"/>
</dbReference>
<dbReference type="EMBL" id="AF081496">
    <property type="protein sequence ID" value="AAC36307.1"/>
    <property type="molecule type" value="mRNA"/>
</dbReference>
<dbReference type="EMBL" id="AK312546">
    <property type="protein sequence ID" value="BAG35444.1"/>
    <property type="molecule type" value="mRNA"/>
</dbReference>
<dbReference type="EMBL" id="AC012391">
    <property type="status" value="NOT_ANNOTATED_CDS"/>
    <property type="molecule type" value="Genomic_DNA"/>
</dbReference>
<dbReference type="EMBL" id="CH471066">
    <property type="protein sequence ID" value="EAW49284.1"/>
    <property type="molecule type" value="Genomic_DNA"/>
</dbReference>
<dbReference type="EMBL" id="CH471066">
    <property type="protein sequence ID" value="EAW49285.1"/>
    <property type="molecule type" value="Genomic_DNA"/>
</dbReference>
<dbReference type="EMBL" id="CH471066">
    <property type="protein sequence ID" value="EAW49286.1"/>
    <property type="molecule type" value="Genomic_DNA"/>
</dbReference>
<dbReference type="EMBL" id="BC005138">
    <property type="protein sequence ID" value="AAH05138.1"/>
    <property type="molecule type" value="mRNA"/>
</dbReference>
<dbReference type="EMBL" id="BC022438">
    <property type="protein sequence ID" value="AAH22438.1"/>
    <property type="molecule type" value="mRNA"/>
</dbReference>
<dbReference type="CCDS" id="CCDS31306.1">
    <molecule id="O43684-2"/>
</dbReference>
<dbReference type="CCDS" id="CCDS7635.1">
    <molecule id="O43684-1"/>
</dbReference>
<dbReference type="RefSeq" id="NP_001007794.1">
    <molecule id="O43684-2"/>
    <property type="nucleotide sequence ID" value="NM_001007793.3"/>
</dbReference>
<dbReference type="RefSeq" id="NP_004716.1">
    <molecule id="O43684-1"/>
    <property type="nucleotide sequence ID" value="NM_004725.4"/>
</dbReference>
<dbReference type="SMR" id="O43684"/>
<dbReference type="BioGRID" id="114621">
    <property type="interactions" value="256"/>
</dbReference>
<dbReference type="ComplexPortal" id="CPX-3946">
    <property type="entry name" value="Mitotic Checkpoint Complex"/>
</dbReference>
<dbReference type="CORUM" id="O43684"/>
<dbReference type="DIP" id="DIP-24205N"/>
<dbReference type="FunCoup" id="O43684">
    <property type="interactions" value="3042"/>
</dbReference>
<dbReference type="IntAct" id="O43684">
    <property type="interactions" value="105"/>
</dbReference>
<dbReference type="MINT" id="O43684"/>
<dbReference type="STRING" id="9606.ENSP00000357858"/>
<dbReference type="CarbonylDB" id="O43684"/>
<dbReference type="GlyGen" id="O43684">
    <property type="glycosylation" value="2 sites, 1 O-linked glycan (2 sites)"/>
</dbReference>
<dbReference type="iPTMnet" id="O43684"/>
<dbReference type="PhosphoSitePlus" id="O43684"/>
<dbReference type="SwissPalm" id="O43684"/>
<dbReference type="BioMuta" id="BUB3"/>
<dbReference type="CPTAC" id="CPTAC-464"/>
<dbReference type="CPTAC" id="CPTAC-465"/>
<dbReference type="jPOST" id="O43684"/>
<dbReference type="MassIVE" id="O43684"/>
<dbReference type="PaxDb" id="9606-ENSP00000357858"/>
<dbReference type="PeptideAtlas" id="O43684"/>
<dbReference type="ProteomicsDB" id="49113">
    <molecule id="O43684-1"/>
</dbReference>
<dbReference type="ProteomicsDB" id="49114">
    <molecule id="O43684-2"/>
</dbReference>
<dbReference type="Pumba" id="O43684"/>
<dbReference type="TopDownProteomics" id="O43684-1">
    <molecule id="O43684-1"/>
</dbReference>
<dbReference type="Antibodypedia" id="1213">
    <property type="antibodies" value="379 antibodies from 41 providers"/>
</dbReference>
<dbReference type="DNASU" id="9184"/>
<dbReference type="Ensembl" id="ENST00000368858.9">
    <molecule id="O43684-2"/>
    <property type="protein sequence ID" value="ENSP00000357851.5"/>
    <property type="gene ID" value="ENSG00000154473.18"/>
</dbReference>
<dbReference type="Ensembl" id="ENST00000368865.9">
    <molecule id="O43684-1"/>
    <property type="protein sequence ID" value="ENSP00000357858.4"/>
    <property type="gene ID" value="ENSG00000154473.18"/>
</dbReference>
<dbReference type="GeneID" id="9184"/>
<dbReference type="KEGG" id="hsa:9184"/>
<dbReference type="MANE-Select" id="ENST00000368865.9">
    <property type="protein sequence ID" value="ENSP00000357858.4"/>
    <property type="RefSeq nucleotide sequence ID" value="NM_004725.4"/>
    <property type="RefSeq protein sequence ID" value="NP_004716.1"/>
</dbReference>
<dbReference type="UCSC" id="uc001lhd.3">
    <molecule id="O43684-1"/>
    <property type="organism name" value="human"/>
</dbReference>
<dbReference type="AGR" id="HGNC:1151"/>
<dbReference type="CTD" id="9184"/>
<dbReference type="DisGeNET" id="9184"/>
<dbReference type="GeneCards" id="BUB3"/>
<dbReference type="HGNC" id="HGNC:1151">
    <property type="gene designation" value="BUB3"/>
</dbReference>
<dbReference type="HPA" id="ENSG00000154473">
    <property type="expression patterns" value="Low tissue specificity"/>
</dbReference>
<dbReference type="MalaCards" id="BUB3"/>
<dbReference type="MIM" id="603719">
    <property type="type" value="gene"/>
</dbReference>
<dbReference type="neXtProt" id="NX_O43684"/>
<dbReference type="OpenTargets" id="ENSG00000154473"/>
<dbReference type="Orphanet" id="1052">
    <property type="disease" value="Mosaic variegated aneuploidy syndrome"/>
</dbReference>
<dbReference type="PharmGKB" id="PA25467"/>
<dbReference type="VEuPathDB" id="HostDB:ENSG00000154473"/>
<dbReference type="eggNOG" id="KOG1036">
    <property type="taxonomic scope" value="Eukaryota"/>
</dbReference>
<dbReference type="GeneTree" id="ENSGT00950000183091"/>
<dbReference type="HOGENOM" id="CLU_038526_0_1_1"/>
<dbReference type="InParanoid" id="O43684"/>
<dbReference type="OMA" id="WDSTLHI"/>
<dbReference type="OrthoDB" id="10262475at2759"/>
<dbReference type="PAN-GO" id="O43684">
    <property type="GO annotations" value="5 GO annotations based on evolutionary models"/>
</dbReference>
<dbReference type="PhylomeDB" id="O43684"/>
<dbReference type="TreeFam" id="TF105454"/>
<dbReference type="PathwayCommons" id="O43684"/>
<dbReference type="Reactome" id="R-HSA-141430">
    <property type="pathway name" value="Inactivation of APC/C via direct inhibition of the APC/C complex"/>
</dbReference>
<dbReference type="Reactome" id="R-HSA-141444">
    <property type="pathway name" value="Amplification of signal from unattached kinetochores via a MAD2 inhibitory signal"/>
</dbReference>
<dbReference type="Reactome" id="R-HSA-174184">
    <property type="pathway name" value="Cdc20:Phospho-APC/C mediated degradation of Cyclin A"/>
</dbReference>
<dbReference type="Reactome" id="R-HSA-176409">
    <property type="pathway name" value="APC/C:Cdc20 mediated degradation of mitotic proteins"/>
</dbReference>
<dbReference type="Reactome" id="R-HSA-179409">
    <property type="pathway name" value="APC-Cdc20 mediated degradation of Nek2A"/>
</dbReference>
<dbReference type="Reactome" id="R-HSA-2467813">
    <property type="pathway name" value="Separation of Sister Chromatids"/>
</dbReference>
<dbReference type="Reactome" id="R-HSA-2500257">
    <property type="pathway name" value="Resolution of Sister Chromatid Cohesion"/>
</dbReference>
<dbReference type="Reactome" id="R-HSA-5663220">
    <property type="pathway name" value="RHO GTPases Activate Formins"/>
</dbReference>
<dbReference type="Reactome" id="R-HSA-68877">
    <property type="pathway name" value="Mitotic Prometaphase"/>
</dbReference>
<dbReference type="Reactome" id="R-HSA-9648025">
    <property type="pathway name" value="EML4 and NUDC in mitotic spindle formation"/>
</dbReference>
<dbReference type="SignaLink" id="O43684"/>
<dbReference type="SIGNOR" id="O43684"/>
<dbReference type="BioGRID-ORCS" id="9184">
    <property type="hits" value="825 hits in 1168 CRISPR screens"/>
</dbReference>
<dbReference type="CD-CODE" id="91857CE7">
    <property type="entry name" value="Nucleolus"/>
</dbReference>
<dbReference type="ChiTaRS" id="BUB3">
    <property type="organism name" value="human"/>
</dbReference>
<dbReference type="GeneWiki" id="BUB3"/>
<dbReference type="GenomeRNAi" id="9184"/>
<dbReference type="Pharos" id="O43684">
    <property type="development level" value="Tbio"/>
</dbReference>
<dbReference type="PRO" id="PR:O43684"/>
<dbReference type="Proteomes" id="UP000005640">
    <property type="component" value="Chromosome 10"/>
</dbReference>
<dbReference type="RNAct" id="O43684">
    <property type="molecule type" value="protein"/>
</dbReference>
<dbReference type="Bgee" id="ENSG00000154473">
    <property type="expression patterns" value="Expressed in gingival epithelium and 211 other cell types or tissues"/>
</dbReference>
<dbReference type="ExpressionAtlas" id="O43684">
    <property type="expression patterns" value="baseline and differential"/>
</dbReference>
<dbReference type="GO" id="GO:1990298">
    <property type="term" value="C:bub1-bub3 complex"/>
    <property type="evidence" value="ECO:0000318"/>
    <property type="project" value="GO_Central"/>
</dbReference>
<dbReference type="GO" id="GO:0005829">
    <property type="term" value="C:cytosol"/>
    <property type="evidence" value="ECO:0000304"/>
    <property type="project" value="Reactome"/>
</dbReference>
<dbReference type="GO" id="GO:0000776">
    <property type="term" value="C:kinetochore"/>
    <property type="evidence" value="ECO:0000314"/>
    <property type="project" value="UniProtKB"/>
</dbReference>
<dbReference type="GO" id="GO:0033597">
    <property type="term" value="C:mitotic checkpoint complex"/>
    <property type="evidence" value="ECO:0000353"/>
    <property type="project" value="ComplexPortal"/>
</dbReference>
<dbReference type="GO" id="GO:0005654">
    <property type="term" value="C:nucleoplasm"/>
    <property type="evidence" value="ECO:0000314"/>
    <property type="project" value="HPA"/>
</dbReference>
<dbReference type="GO" id="GO:0043130">
    <property type="term" value="F:ubiquitin binding"/>
    <property type="evidence" value="ECO:0000318"/>
    <property type="project" value="GO_Central"/>
</dbReference>
<dbReference type="GO" id="GO:0008608">
    <property type="term" value="P:attachment of spindle microtubules to kinetochore"/>
    <property type="evidence" value="ECO:0000314"/>
    <property type="project" value="UniProtKB"/>
</dbReference>
<dbReference type="GO" id="GO:0051301">
    <property type="term" value="P:cell division"/>
    <property type="evidence" value="ECO:0007669"/>
    <property type="project" value="UniProtKB-KW"/>
</dbReference>
<dbReference type="GO" id="GO:0051321">
    <property type="term" value="P:meiotic cell cycle"/>
    <property type="evidence" value="ECO:0007669"/>
    <property type="project" value="UniProtKB-KW"/>
</dbReference>
<dbReference type="GO" id="GO:0007094">
    <property type="term" value="P:mitotic spindle assembly checkpoint signaling"/>
    <property type="evidence" value="ECO:0000318"/>
    <property type="project" value="GO_Central"/>
</dbReference>
<dbReference type="GO" id="GO:0034501">
    <property type="term" value="P:protein localization to kinetochore"/>
    <property type="evidence" value="ECO:0000353"/>
    <property type="project" value="UniProtKB"/>
</dbReference>
<dbReference type="FunFam" id="2.130.10.10:FF:000047">
    <property type="entry name" value="Mitotic checkpoint protein bub3, putative"/>
    <property type="match status" value="1"/>
</dbReference>
<dbReference type="Gene3D" id="2.130.10.10">
    <property type="entry name" value="YVTN repeat-like/Quinoprotein amine dehydrogenase"/>
    <property type="match status" value="1"/>
</dbReference>
<dbReference type="InterPro" id="IPR020472">
    <property type="entry name" value="G-protein_beta_WD-40_rep"/>
</dbReference>
<dbReference type="InterPro" id="IPR015943">
    <property type="entry name" value="WD40/YVTN_repeat-like_dom_sf"/>
</dbReference>
<dbReference type="InterPro" id="IPR036322">
    <property type="entry name" value="WD40_repeat_dom_sf"/>
</dbReference>
<dbReference type="InterPro" id="IPR001680">
    <property type="entry name" value="WD40_rpt"/>
</dbReference>
<dbReference type="PANTHER" id="PTHR10971">
    <property type="entry name" value="MRNA EXPORT FACTOR AND BUB3"/>
    <property type="match status" value="1"/>
</dbReference>
<dbReference type="Pfam" id="PF00400">
    <property type="entry name" value="WD40"/>
    <property type="match status" value="3"/>
</dbReference>
<dbReference type="PRINTS" id="PR00320">
    <property type="entry name" value="GPROTEINBRPT"/>
</dbReference>
<dbReference type="SMART" id="SM00320">
    <property type="entry name" value="WD40"/>
    <property type="match status" value="6"/>
</dbReference>
<dbReference type="SUPFAM" id="SSF50978">
    <property type="entry name" value="WD40 repeat-like"/>
    <property type="match status" value="1"/>
</dbReference>
<dbReference type="PROSITE" id="PS50082">
    <property type="entry name" value="WD_REPEATS_2"/>
    <property type="match status" value="2"/>
</dbReference>
<dbReference type="PROSITE" id="PS50294">
    <property type="entry name" value="WD_REPEATS_REGION"/>
    <property type="match status" value="1"/>
</dbReference>
<comment type="function">
    <text evidence="3 4 5">Has a dual function in spindle-assembly checkpoint signaling and in promoting the establishment of correct kinetochore-microtubule (K-MT) attachments. Promotes the formation of stable end-on bipolar attachments. Necessary for kinetochore localization of BUB1. Regulates chromosome segregation during oocyte meiosis. The BUB1/BUB3 complex plays a role in the inhibition of anaphase-promoting complex or cyclosome (APC/C) when spindle-assembly checkpoint is activated and inhibits the ubiquitin ligase activity of APC/C by phosphorylating its activator CDC20. This complex can also phosphorylate MAD1L1.</text>
</comment>
<comment type="subunit">
    <text evidence="3 4 6 7">Interacts with BUB1 and BUBR1. The BUB1/BUB3 complex interacts with MAD1L1. Interacts with ZNF207/BuGZ; leading to promote stability and kinetochore loading of BUB3.</text>
</comment>
<comment type="interaction">
    <interactant intactId="EBI-1050987">
        <id>O43684</id>
    </interactant>
    <interactant intactId="EBI-930964">
        <id>P54253</id>
        <label>ATXN1</label>
    </interactant>
    <organismsDiffer>false</organismsDiffer>
    <experiments>7</experiments>
</comment>
<comment type="interaction">
    <interactant intactId="EBI-1050987">
        <id>O43684</id>
    </interactant>
    <interactant intactId="EBI-748936">
        <id>O43683</id>
        <label>BUB1</label>
    </interactant>
    <organismsDiffer>false</organismsDiffer>
    <experiments>8</experiments>
</comment>
<comment type="interaction">
    <interactant intactId="EBI-1050987">
        <id>O43684</id>
    </interactant>
    <interactant intactId="EBI-1001438">
        <id>O60566</id>
        <label>BUB1B</label>
    </interactant>
    <organismsDiffer>false</organismsDiffer>
    <experiments>13</experiments>
</comment>
<comment type="interaction">
    <interactant intactId="EBI-1050987">
        <id>O43684</id>
    </interactant>
    <interactant intactId="EBI-1050964">
        <id>O43586</id>
        <label>PSTPIP1</label>
    </interactant>
    <organismsDiffer>false</organismsDiffer>
    <experiments>3</experiments>
</comment>
<comment type="interaction">
    <interactant intactId="EBI-1050987">
        <id>O43684</id>
    </interactant>
    <interactant intactId="EBI-2513125">
        <id>O43670</id>
        <label>ZNF207</label>
    </interactant>
    <organismsDiffer>false</organismsDiffer>
    <experiments>5</experiments>
</comment>
<comment type="interaction">
    <interactant intactId="EBI-1050987">
        <id>O43684</id>
    </interactant>
    <interactant intactId="EBI-1781818">
        <id>Q5XI90</id>
        <label>Dynlt3</label>
    </interactant>
    <organismsDiffer>true</organismsDiffer>
    <experiments>2</experiments>
</comment>
<comment type="interaction">
    <interactant intactId="EBI-1050987">
        <id>O43684</id>
    </interactant>
    <interactant intactId="EBI-10689860">
        <id>A0A0H3NF38</id>
        <label>sspH2</label>
    </interactant>
    <organismsDiffer>true</organismsDiffer>
    <experiments>3</experiments>
</comment>
<comment type="subcellular location">
    <subcellularLocation>
        <location>Nucleus</location>
    </subcellularLocation>
    <subcellularLocation>
        <location evidence="1">Chromosome</location>
        <location evidence="1">Centromere</location>
        <location evidence="1">Kinetochore</location>
    </subcellularLocation>
    <text evidence="1">Starts to localize at kinetochores in prometaphase I (Pro-MI) stage and maintains the localization until the metaphase I-anaphase I (MI-AI) transition.</text>
</comment>
<comment type="alternative products">
    <event type="alternative splicing"/>
    <isoform>
        <id>O43684-1</id>
        <name>1</name>
        <sequence type="displayed"/>
    </isoform>
    <isoform>
        <id>O43684-2</id>
        <name>2</name>
        <sequence type="described" ref="VSP_038655"/>
    </isoform>
</comment>
<comment type="PTM">
    <text evidence="2">Poly-ADP-ribosylated by PARP1.</text>
</comment>
<comment type="PTM">
    <text evidence="8">Ubiquitinated by UBR5, promoting disassembly of the mitotic checkpoint complex from the APC/C complex.</text>
</comment>
<comment type="similarity">
    <text evidence="10">Belongs to the WD repeat BUB3 family.</text>
</comment>
<organism>
    <name type="scientific">Homo sapiens</name>
    <name type="common">Human</name>
    <dbReference type="NCBI Taxonomy" id="9606"/>
    <lineage>
        <taxon>Eukaryota</taxon>
        <taxon>Metazoa</taxon>
        <taxon>Chordata</taxon>
        <taxon>Craniata</taxon>
        <taxon>Vertebrata</taxon>
        <taxon>Euteleostomi</taxon>
        <taxon>Mammalia</taxon>
        <taxon>Eutheria</taxon>
        <taxon>Euarchontoglires</taxon>
        <taxon>Primates</taxon>
        <taxon>Haplorrhini</taxon>
        <taxon>Catarrhini</taxon>
        <taxon>Hominidae</taxon>
        <taxon>Homo</taxon>
    </lineage>
</organism>
<protein>
    <recommendedName>
        <fullName>Mitotic checkpoint protein BUB3</fullName>
    </recommendedName>
</protein>